<organism>
    <name type="scientific">Brucella melitensis biotype 1 (strain ATCC 23456 / CCUG 17765 / NCTC 10094 / 16M)</name>
    <dbReference type="NCBI Taxonomy" id="224914"/>
    <lineage>
        <taxon>Bacteria</taxon>
        <taxon>Pseudomonadati</taxon>
        <taxon>Pseudomonadota</taxon>
        <taxon>Alphaproteobacteria</taxon>
        <taxon>Hyphomicrobiales</taxon>
        <taxon>Brucellaceae</taxon>
        <taxon>Brucella/Ochrobactrum group</taxon>
        <taxon>Brucella</taxon>
    </lineage>
</organism>
<comment type="function">
    <text evidence="1">Allows the formation of correctly charged Asn-tRNA(Asn) or Gln-tRNA(Gln) through the transamidation of misacylated Asp-tRNA(Asn) or Glu-tRNA(Gln) in organisms which lack either or both of asparaginyl-tRNA or glutaminyl-tRNA synthetases. The reaction takes place in the presence of glutamine and ATP through an activated phospho-Asp-tRNA(Asn) or phospho-Glu-tRNA(Gln).</text>
</comment>
<comment type="catalytic activity">
    <reaction evidence="1">
        <text>L-glutamyl-tRNA(Gln) + L-glutamine + ATP + H2O = L-glutaminyl-tRNA(Gln) + L-glutamate + ADP + phosphate + H(+)</text>
        <dbReference type="Rhea" id="RHEA:17521"/>
        <dbReference type="Rhea" id="RHEA-COMP:9681"/>
        <dbReference type="Rhea" id="RHEA-COMP:9684"/>
        <dbReference type="ChEBI" id="CHEBI:15377"/>
        <dbReference type="ChEBI" id="CHEBI:15378"/>
        <dbReference type="ChEBI" id="CHEBI:29985"/>
        <dbReference type="ChEBI" id="CHEBI:30616"/>
        <dbReference type="ChEBI" id="CHEBI:43474"/>
        <dbReference type="ChEBI" id="CHEBI:58359"/>
        <dbReference type="ChEBI" id="CHEBI:78520"/>
        <dbReference type="ChEBI" id="CHEBI:78521"/>
        <dbReference type="ChEBI" id="CHEBI:456216"/>
    </reaction>
</comment>
<comment type="catalytic activity">
    <reaction evidence="1">
        <text>L-aspartyl-tRNA(Asn) + L-glutamine + ATP + H2O = L-asparaginyl-tRNA(Asn) + L-glutamate + ADP + phosphate + 2 H(+)</text>
        <dbReference type="Rhea" id="RHEA:14513"/>
        <dbReference type="Rhea" id="RHEA-COMP:9674"/>
        <dbReference type="Rhea" id="RHEA-COMP:9677"/>
        <dbReference type="ChEBI" id="CHEBI:15377"/>
        <dbReference type="ChEBI" id="CHEBI:15378"/>
        <dbReference type="ChEBI" id="CHEBI:29985"/>
        <dbReference type="ChEBI" id="CHEBI:30616"/>
        <dbReference type="ChEBI" id="CHEBI:43474"/>
        <dbReference type="ChEBI" id="CHEBI:58359"/>
        <dbReference type="ChEBI" id="CHEBI:78515"/>
        <dbReference type="ChEBI" id="CHEBI:78516"/>
        <dbReference type="ChEBI" id="CHEBI:456216"/>
    </reaction>
</comment>
<comment type="subunit">
    <text evidence="1">Heterotrimer of A, B and C subunits.</text>
</comment>
<comment type="similarity">
    <text evidence="1">Belongs to the GatB/GatE family. GatB subfamily.</text>
</comment>
<accession>P64197</accession>
<accession>Q8YGT9</accession>
<gene>
    <name evidence="1" type="primary">gatB</name>
    <name type="ordered locus">BMEI1068</name>
</gene>
<feature type="chain" id="PRO_0000148770" description="Aspartyl/glutamyl-tRNA(Asn/Gln) amidotransferase subunit B">
    <location>
        <begin position="1"/>
        <end position="500"/>
    </location>
</feature>
<dbReference type="EC" id="6.3.5.-" evidence="1"/>
<dbReference type="EMBL" id="AE008917">
    <property type="protein sequence ID" value="AAL52249.1"/>
    <property type="molecule type" value="Genomic_DNA"/>
</dbReference>
<dbReference type="PIR" id="AF3385">
    <property type="entry name" value="AF3385"/>
</dbReference>
<dbReference type="RefSeq" id="WP_002964030.1">
    <property type="nucleotide sequence ID" value="NZ_GG703778.1"/>
</dbReference>
<dbReference type="SMR" id="P64197"/>
<dbReference type="GeneID" id="97533805"/>
<dbReference type="KEGG" id="bme:BMEI1068"/>
<dbReference type="KEGG" id="bmel:DK63_346"/>
<dbReference type="PATRIC" id="fig|224914.52.peg.358"/>
<dbReference type="eggNOG" id="COG0064">
    <property type="taxonomic scope" value="Bacteria"/>
</dbReference>
<dbReference type="PhylomeDB" id="P64197"/>
<dbReference type="Proteomes" id="UP000000419">
    <property type="component" value="Chromosome I"/>
</dbReference>
<dbReference type="GO" id="GO:0050566">
    <property type="term" value="F:asparaginyl-tRNA synthase (glutamine-hydrolyzing) activity"/>
    <property type="evidence" value="ECO:0007669"/>
    <property type="project" value="RHEA"/>
</dbReference>
<dbReference type="GO" id="GO:0005524">
    <property type="term" value="F:ATP binding"/>
    <property type="evidence" value="ECO:0007669"/>
    <property type="project" value="UniProtKB-KW"/>
</dbReference>
<dbReference type="GO" id="GO:0050567">
    <property type="term" value="F:glutaminyl-tRNA synthase (glutamine-hydrolyzing) activity"/>
    <property type="evidence" value="ECO:0007669"/>
    <property type="project" value="UniProtKB-UniRule"/>
</dbReference>
<dbReference type="GO" id="GO:0070681">
    <property type="term" value="P:glutaminyl-tRNAGln biosynthesis via transamidation"/>
    <property type="evidence" value="ECO:0007669"/>
    <property type="project" value="TreeGrafter"/>
</dbReference>
<dbReference type="GO" id="GO:0006412">
    <property type="term" value="P:translation"/>
    <property type="evidence" value="ECO:0007669"/>
    <property type="project" value="UniProtKB-UniRule"/>
</dbReference>
<dbReference type="FunFam" id="1.10.10.410:FF:000001">
    <property type="entry name" value="Aspartyl/glutamyl-tRNA(Asn/Gln) amidotransferase subunit B"/>
    <property type="match status" value="1"/>
</dbReference>
<dbReference type="Gene3D" id="1.10.10.410">
    <property type="match status" value="1"/>
</dbReference>
<dbReference type="Gene3D" id="1.10.150.380">
    <property type="entry name" value="GatB domain, N-terminal subdomain"/>
    <property type="match status" value="1"/>
</dbReference>
<dbReference type="HAMAP" id="MF_00121">
    <property type="entry name" value="GatB"/>
    <property type="match status" value="1"/>
</dbReference>
<dbReference type="InterPro" id="IPR017959">
    <property type="entry name" value="Asn/Gln-tRNA_amidoTrfase_suB/E"/>
</dbReference>
<dbReference type="InterPro" id="IPR006075">
    <property type="entry name" value="Asn/Gln-tRNA_Trfase_suB/E_cat"/>
</dbReference>
<dbReference type="InterPro" id="IPR018027">
    <property type="entry name" value="Asn/Gln_amidotransferase"/>
</dbReference>
<dbReference type="InterPro" id="IPR003789">
    <property type="entry name" value="Asn/Gln_tRNA_amidoTrase-B-like"/>
</dbReference>
<dbReference type="InterPro" id="IPR004413">
    <property type="entry name" value="GatB"/>
</dbReference>
<dbReference type="InterPro" id="IPR042114">
    <property type="entry name" value="GatB_C_1"/>
</dbReference>
<dbReference type="InterPro" id="IPR023168">
    <property type="entry name" value="GatB_Yqey_C_2"/>
</dbReference>
<dbReference type="InterPro" id="IPR017958">
    <property type="entry name" value="Gln-tRNA_amidoTrfase_suB_CS"/>
</dbReference>
<dbReference type="InterPro" id="IPR014746">
    <property type="entry name" value="Gln_synth/guanido_kin_cat_dom"/>
</dbReference>
<dbReference type="NCBIfam" id="TIGR00133">
    <property type="entry name" value="gatB"/>
    <property type="match status" value="1"/>
</dbReference>
<dbReference type="NCBIfam" id="NF004012">
    <property type="entry name" value="PRK05477.1-2"/>
    <property type="match status" value="1"/>
</dbReference>
<dbReference type="NCBIfam" id="NF004014">
    <property type="entry name" value="PRK05477.1-4"/>
    <property type="match status" value="1"/>
</dbReference>
<dbReference type="NCBIfam" id="NF004015">
    <property type="entry name" value="PRK05477.1-5"/>
    <property type="match status" value="1"/>
</dbReference>
<dbReference type="PANTHER" id="PTHR11659">
    <property type="entry name" value="GLUTAMYL-TRNA GLN AMIDOTRANSFERASE SUBUNIT B MITOCHONDRIAL AND PROKARYOTIC PET112-RELATED"/>
    <property type="match status" value="1"/>
</dbReference>
<dbReference type="PANTHER" id="PTHR11659:SF0">
    <property type="entry name" value="GLUTAMYL-TRNA(GLN) AMIDOTRANSFERASE SUBUNIT B, MITOCHONDRIAL"/>
    <property type="match status" value="1"/>
</dbReference>
<dbReference type="Pfam" id="PF02934">
    <property type="entry name" value="GatB_N"/>
    <property type="match status" value="1"/>
</dbReference>
<dbReference type="Pfam" id="PF02637">
    <property type="entry name" value="GatB_Yqey"/>
    <property type="match status" value="1"/>
</dbReference>
<dbReference type="SMART" id="SM00845">
    <property type="entry name" value="GatB_Yqey"/>
    <property type="match status" value="1"/>
</dbReference>
<dbReference type="SUPFAM" id="SSF89095">
    <property type="entry name" value="GatB/YqeY motif"/>
    <property type="match status" value="1"/>
</dbReference>
<dbReference type="SUPFAM" id="SSF55931">
    <property type="entry name" value="Glutamine synthetase/guanido kinase"/>
    <property type="match status" value="1"/>
</dbReference>
<dbReference type="PROSITE" id="PS01234">
    <property type="entry name" value="GATB"/>
    <property type="match status" value="1"/>
</dbReference>
<reference key="1">
    <citation type="journal article" date="2002" name="Proc. Natl. Acad. Sci. U.S.A.">
        <title>The genome sequence of the facultative intracellular pathogen Brucella melitensis.</title>
        <authorList>
            <person name="DelVecchio V.G."/>
            <person name="Kapatral V."/>
            <person name="Redkar R.J."/>
            <person name="Patra G."/>
            <person name="Mujer C."/>
            <person name="Los T."/>
            <person name="Ivanova N."/>
            <person name="Anderson I."/>
            <person name="Bhattacharyya A."/>
            <person name="Lykidis A."/>
            <person name="Reznik G."/>
            <person name="Jablonski L."/>
            <person name="Larsen N."/>
            <person name="D'Souza M."/>
            <person name="Bernal A."/>
            <person name="Mazur M."/>
            <person name="Goltsman E."/>
            <person name="Selkov E."/>
            <person name="Elzer P.H."/>
            <person name="Hagius S."/>
            <person name="O'Callaghan D."/>
            <person name="Letesson J.-J."/>
            <person name="Haselkorn R."/>
            <person name="Kyrpides N.C."/>
            <person name="Overbeek R."/>
        </authorList>
    </citation>
    <scope>NUCLEOTIDE SEQUENCE [LARGE SCALE GENOMIC DNA]</scope>
    <source>
        <strain>ATCC 23456 / CCUG 17765 / NCTC 10094 / 16M</strain>
    </source>
</reference>
<evidence type="ECO:0000255" key="1">
    <source>
        <dbReference type="HAMAP-Rule" id="MF_00121"/>
    </source>
</evidence>
<proteinExistence type="inferred from homology"/>
<name>GATB_BRUME</name>
<sequence>MSIIDTRTPEPKRFISGATGDWEVVIGMEVHAQVTSESKLFSGASTAFGAEPNSNVSLVDAAMPGMLPVINLECVRQAVRTGIGLNAQINLKSVFDRKNYFYPDLPQGYQISQFKQPIVGEGKIMISVGPDNKGQFEDVEIGIERLHLEQDAGKSMHDQHPTMSYVDLNRSGVALMEIVSKPDLRSSDEARAYLTKLRTIVRYLGTCDGNMDEGSMRADVNVSVRRPGGEFGTRCEIKNVNSIRFVGQAIEYEARRQIAILEDGGVIDQETRLFDPVKGETRSMRSKEEAHDYRYFPDPDLLPLEFDQAFVDALAAKLPELPDVKKQRLVETLGISVYDASILVTEKAIADYYEAVAEGRDGKAAANWVINDLLGALNKAGKDIEESPISPAQLGAIIDLIKEGTISGKIAKDLFEIVWNEGGDPKKLVEERGMKQVTDTGAIEKAVDDVIAANPDKVEQAKAKPTLAGWFVGQVMKATGGKANPQAVNELVKSKLGIEE</sequence>
<protein>
    <recommendedName>
        <fullName evidence="1">Aspartyl/glutamyl-tRNA(Asn/Gln) amidotransferase subunit B</fullName>
        <shortName evidence="1">Asp/Glu-ADT subunit B</shortName>
        <ecNumber evidence="1">6.3.5.-</ecNumber>
    </recommendedName>
</protein>
<keyword id="KW-0067">ATP-binding</keyword>
<keyword id="KW-0436">Ligase</keyword>
<keyword id="KW-0547">Nucleotide-binding</keyword>
<keyword id="KW-0648">Protein biosynthesis</keyword>